<accession>P04657</accession>
<accession>Q9VJJ4</accession>
<feature type="initiator methionine" description="Removed" evidence="1">
    <location>
        <position position="1"/>
    </location>
</feature>
<feature type="chain" id="PRO_0000108259" description="Cytochrome c-1">
    <location>
        <begin position="2"/>
        <end position="105"/>
    </location>
</feature>
<feature type="binding site" description="covalent">
    <location>
        <position position="17"/>
    </location>
    <ligand>
        <name>heme c</name>
        <dbReference type="ChEBI" id="CHEBI:61717"/>
    </ligand>
</feature>
<feature type="binding site" description="covalent">
    <location>
        <position position="20"/>
    </location>
    <ligand>
        <name>heme c</name>
        <dbReference type="ChEBI" id="CHEBI:61717"/>
    </ligand>
</feature>
<feature type="binding site" description="axial binding residue">
    <location>
        <position position="21"/>
    </location>
    <ligand>
        <name>heme c</name>
        <dbReference type="ChEBI" id="CHEBI:61717"/>
    </ligand>
    <ligandPart>
        <name>Fe</name>
        <dbReference type="ChEBI" id="CHEBI:18248"/>
    </ligandPart>
</feature>
<feature type="binding site" description="axial binding residue">
    <location>
        <position position="83"/>
    </location>
    <ligand>
        <name>heme c</name>
        <dbReference type="ChEBI" id="CHEBI:61717"/>
    </ligand>
    <ligandPart>
        <name>Fe</name>
        <dbReference type="ChEBI" id="CHEBI:18248"/>
    </ligandPart>
</feature>
<organism>
    <name type="scientific">Drosophila melanogaster</name>
    <name type="common">Fruit fly</name>
    <dbReference type="NCBI Taxonomy" id="7227"/>
    <lineage>
        <taxon>Eukaryota</taxon>
        <taxon>Metazoa</taxon>
        <taxon>Ecdysozoa</taxon>
        <taxon>Arthropoda</taxon>
        <taxon>Hexapoda</taxon>
        <taxon>Insecta</taxon>
        <taxon>Pterygota</taxon>
        <taxon>Neoptera</taxon>
        <taxon>Endopterygota</taxon>
        <taxon>Diptera</taxon>
        <taxon>Brachycera</taxon>
        <taxon>Muscomorpha</taxon>
        <taxon>Ephydroidea</taxon>
        <taxon>Drosophilidae</taxon>
        <taxon>Drosophila</taxon>
        <taxon>Sophophora</taxon>
    </lineage>
</organism>
<keyword id="KW-0249">Electron transport</keyword>
<keyword id="KW-0349">Heme</keyword>
<keyword id="KW-0408">Iron</keyword>
<keyword id="KW-0479">Metal-binding</keyword>
<keyword id="KW-0496">Mitochondrion</keyword>
<keyword id="KW-1185">Reference proteome</keyword>
<keyword id="KW-0679">Respiratory chain</keyword>
<keyword id="KW-0813">Transport</keyword>
<comment type="function">
    <text>Electron carrier protein. The oxidized form of the cytochrome c heme group can accept an electron from the heme group of the cytochrome c1 subunit of cytochrome reductase. Cytochrome c then transfers this electron to the cytochrome oxidase complex, the final protein carrier in the mitochondrial electron-transport chain.</text>
</comment>
<comment type="subcellular location">
    <subcellularLocation>
        <location>Mitochondrion intermembrane space</location>
    </subcellularLocation>
    <text>Loosely associated with the inner membrane.</text>
</comment>
<comment type="developmental stage">
    <text>Expressed at constant, but relatively low levels throughout development.</text>
</comment>
<comment type="PTM">
    <text>Binds 1 heme c group covalently per subunit.</text>
</comment>
<comment type="miscellaneous">
    <text>There are two cytochrome C genes in Drosophila: Cyt-c-d (distal) and Cyt-c-p (proximal).</text>
</comment>
<comment type="similarity">
    <text evidence="2">Belongs to the cytochrome c family.</text>
</comment>
<comment type="online information" name="Protein Spotlight">
    <link uri="https://www.proteinspotlight.org/back_issues/076"/>
    <text>Life shuttle - Issue 76 of November 2006</text>
</comment>
<reference key="1">
    <citation type="journal article" date="1985" name="Nucleic Acids Res.">
        <title>Characterization of two Drosophila melanogaster cytochrome c genes and their transcripts.</title>
        <authorList>
            <person name="Limbach K.J."/>
            <person name="Wu R."/>
        </authorList>
    </citation>
    <scope>NUCLEOTIDE SEQUENCE [GENOMIC DNA]</scope>
</reference>
<reference key="2">
    <citation type="journal article" date="2000" name="Science">
        <title>The genome sequence of Drosophila melanogaster.</title>
        <authorList>
            <person name="Adams M.D."/>
            <person name="Celniker S.E."/>
            <person name="Holt R.A."/>
            <person name="Evans C.A."/>
            <person name="Gocayne J.D."/>
            <person name="Amanatides P.G."/>
            <person name="Scherer S.E."/>
            <person name="Li P.W."/>
            <person name="Hoskins R.A."/>
            <person name="Galle R.F."/>
            <person name="George R.A."/>
            <person name="Lewis S.E."/>
            <person name="Richards S."/>
            <person name="Ashburner M."/>
            <person name="Henderson S.N."/>
            <person name="Sutton G.G."/>
            <person name="Wortman J.R."/>
            <person name="Yandell M.D."/>
            <person name="Zhang Q."/>
            <person name="Chen L.X."/>
            <person name="Brandon R.C."/>
            <person name="Rogers Y.-H.C."/>
            <person name="Blazej R.G."/>
            <person name="Champe M."/>
            <person name="Pfeiffer B.D."/>
            <person name="Wan K.H."/>
            <person name="Doyle C."/>
            <person name="Baxter E.G."/>
            <person name="Helt G."/>
            <person name="Nelson C.R."/>
            <person name="Miklos G.L.G."/>
            <person name="Abril J.F."/>
            <person name="Agbayani A."/>
            <person name="An H.-J."/>
            <person name="Andrews-Pfannkoch C."/>
            <person name="Baldwin D."/>
            <person name="Ballew R.M."/>
            <person name="Basu A."/>
            <person name="Baxendale J."/>
            <person name="Bayraktaroglu L."/>
            <person name="Beasley E.M."/>
            <person name="Beeson K.Y."/>
            <person name="Benos P.V."/>
            <person name="Berman B.P."/>
            <person name="Bhandari D."/>
            <person name="Bolshakov S."/>
            <person name="Borkova D."/>
            <person name="Botchan M.R."/>
            <person name="Bouck J."/>
            <person name="Brokstein P."/>
            <person name="Brottier P."/>
            <person name="Burtis K.C."/>
            <person name="Busam D.A."/>
            <person name="Butler H."/>
            <person name="Cadieu E."/>
            <person name="Center A."/>
            <person name="Chandra I."/>
            <person name="Cherry J.M."/>
            <person name="Cawley S."/>
            <person name="Dahlke C."/>
            <person name="Davenport L.B."/>
            <person name="Davies P."/>
            <person name="de Pablos B."/>
            <person name="Delcher A."/>
            <person name="Deng Z."/>
            <person name="Mays A.D."/>
            <person name="Dew I."/>
            <person name="Dietz S.M."/>
            <person name="Dodson K."/>
            <person name="Doup L.E."/>
            <person name="Downes M."/>
            <person name="Dugan-Rocha S."/>
            <person name="Dunkov B.C."/>
            <person name="Dunn P."/>
            <person name="Durbin K.J."/>
            <person name="Evangelista C.C."/>
            <person name="Ferraz C."/>
            <person name="Ferriera S."/>
            <person name="Fleischmann W."/>
            <person name="Fosler C."/>
            <person name="Gabrielian A.E."/>
            <person name="Garg N.S."/>
            <person name="Gelbart W.M."/>
            <person name="Glasser K."/>
            <person name="Glodek A."/>
            <person name="Gong F."/>
            <person name="Gorrell J.H."/>
            <person name="Gu Z."/>
            <person name="Guan P."/>
            <person name="Harris M."/>
            <person name="Harris N.L."/>
            <person name="Harvey D.A."/>
            <person name="Heiman T.J."/>
            <person name="Hernandez J.R."/>
            <person name="Houck J."/>
            <person name="Hostin D."/>
            <person name="Houston K.A."/>
            <person name="Howland T.J."/>
            <person name="Wei M.-H."/>
            <person name="Ibegwam C."/>
            <person name="Jalali M."/>
            <person name="Kalush F."/>
            <person name="Karpen G.H."/>
            <person name="Ke Z."/>
            <person name="Kennison J.A."/>
            <person name="Ketchum K.A."/>
            <person name="Kimmel B.E."/>
            <person name="Kodira C.D."/>
            <person name="Kraft C.L."/>
            <person name="Kravitz S."/>
            <person name="Kulp D."/>
            <person name="Lai Z."/>
            <person name="Lasko P."/>
            <person name="Lei Y."/>
            <person name="Levitsky A.A."/>
            <person name="Li J.H."/>
            <person name="Li Z."/>
            <person name="Liang Y."/>
            <person name="Lin X."/>
            <person name="Liu X."/>
            <person name="Mattei B."/>
            <person name="McIntosh T.C."/>
            <person name="McLeod M.P."/>
            <person name="McPherson D."/>
            <person name="Merkulov G."/>
            <person name="Milshina N.V."/>
            <person name="Mobarry C."/>
            <person name="Morris J."/>
            <person name="Moshrefi A."/>
            <person name="Mount S.M."/>
            <person name="Moy M."/>
            <person name="Murphy B."/>
            <person name="Murphy L."/>
            <person name="Muzny D.M."/>
            <person name="Nelson D.L."/>
            <person name="Nelson D.R."/>
            <person name="Nelson K.A."/>
            <person name="Nixon K."/>
            <person name="Nusskern D.R."/>
            <person name="Pacleb J.M."/>
            <person name="Palazzolo M."/>
            <person name="Pittman G.S."/>
            <person name="Pan S."/>
            <person name="Pollard J."/>
            <person name="Puri V."/>
            <person name="Reese M.G."/>
            <person name="Reinert K."/>
            <person name="Remington K."/>
            <person name="Saunders R.D.C."/>
            <person name="Scheeler F."/>
            <person name="Shen H."/>
            <person name="Shue B.C."/>
            <person name="Siden-Kiamos I."/>
            <person name="Simpson M."/>
            <person name="Skupski M.P."/>
            <person name="Smith T.J."/>
            <person name="Spier E."/>
            <person name="Spradling A.C."/>
            <person name="Stapleton M."/>
            <person name="Strong R."/>
            <person name="Sun E."/>
            <person name="Svirskas R."/>
            <person name="Tector C."/>
            <person name="Turner R."/>
            <person name="Venter E."/>
            <person name="Wang A.H."/>
            <person name="Wang X."/>
            <person name="Wang Z.-Y."/>
            <person name="Wassarman D.A."/>
            <person name="Weinstock G.M."/>
            <person name="Weissenbach J."/>
            <person name="Williams S.M."/>
            <person name="Woodage T."/>
            <person name="Worley K.C."/>
            <person name="Wu D."/>
            <person name="Yang S."/>
            <person name="Yao Q.A."/>
            <person name="Ye J."/>
            <person name="Yeh R.-F."/>
            <person name="Zaveri J.S."/>
            <person name="Zhan M."/>
            <person name="Zhang G."/>
            <person name="Zhao Q."/>
            <person name="Zheng L."/>
            <person name="Zheng X.H."/>
            <person name="Zhong F.N."/>
            <person name="Zhong W."/>
            <person name="Zhou X."/>
            <person name="Zhu S.C."/>
            <person name="Zhu X."/>
            <person name="Smith H.O."/>
            <person name="Gibbs R.A."/>
            <person name="Myers E.W."/>
            <person name="Rubin G.M."/>
            <person name="Venter J.C."/>
        </authorList>
    </citation>
    <scope>NUCLEOTIDE SEQUENCE [LARGE SCALE GENOMIC DNA]</scope>
    <source>
        <strain>Berkeley</strain>
    </source>
</reference>
<reference key="3">
    <citation type="journal article" date="2002" name="Genome Biol.">
        <title>Annotation of the Drosophila melanogaster euchromatic genome: a systematic review.</title>
        <authorList>
            <person name="Misra S."/>
            <person name="Crosby M.A."/>
            <person name="Mungall C.J."/>
            <person name="Matthews B.B."/>
            <person name="Campbell K.S."/>
            <person name="Hradecky P."/>
            <person name="Huang Y."/>
            <person name="Kaminker J.S."/>
            <person name="Millburn G.H."/>
            <person name="Prochnik S.E."/>
            <person name="Smith C.D."/>
            <person name="Tupy J.L."/>
            <person name="Whitfield E.J."/>
            <person name="Bayraktaroglu L."/>
            <person name="Berman B.P."/>
            <person name="Bettencourt B.R."/>
            <person name="Celniker S.E."/>
            <person name="de Grey A.D.N.J."/>
            <person name="Drysdale R.A."/>
            <person name="Harris N.L."/>
            <person name="Richter J."/>
            <person name="Russo S."/>
            <person name="Schroeder A.J."/>
            <person name="Shu S.Q."/>
            <person name="Stapleton M."/>
            <person name="Yamada C."/>
            <person name="Ashburner M."/>
            <person name="Gelbart W.M."/>
            <person name="Rubin G.M."/>
            <person name="Lewis S.E."/>
        </authorList>
    </citation>
    <scope>GENOME REANNOTATION</scope>
    <source>
        <strain>Berkeley</strain>
    </source>
</reference>
<reference key="4">
    <citation type="submission" date="2003-03" db="EMBL/GenBank/DDBJ databases">
        <authorList>
            <person name="Stapleton M."/>
            <person name="Brokstein P."/>
            <person name="Hong L."/>
            <person name="Agbayani A."/>
            <person name="Carlson J.W."/>
            <person name="Champe M."/>
            <person name="Chavez C."/>
            <person name="Dorsett V."/>
            <person name="Dresnek D."/>
            <person name="Farfan D."/>
            <person name="Frise E."/>
            <person name="George R.A."/>
            <person name="Gonzalez M."/>
            <person name="Guarin H."/>
            <person name="Kronmiller B."/>
            <person name="Li P.W."/>
            <person name="Liao G."/>
            <person name="Miranda A."/>
            <person name="Mungall C.J."/>
            <person name="Nunoo J."/>
            <person name="Pacleb J.M."/>
            <person name="Paragas V."/>
            <person name="Park S."/>
            <person name="Patel S."/>
            <person name="Phouanenavong S."/>
            <person name="Wan K.H."/>
            <person name="Yu C."/>
            <person name="Lewis S.E."/>
            <person name="Rubin G.M."/>
            <person name="Celniker S.E."/>
        </authorList>
    </citation>
    <scope>NUCLEOTIDE SEQUENCE [LARGE SCALE MRNA]</scope>
    <source>
        <strain>Berkeley</strain>
        <tissue>Larva</tissue>
        <tissue>Pupae</tissue>
    </source>
</reference>
<dbReference type="EMBL" id="X01761">
    <property type="protein sequence ID" value="CAA25901.1"/>
    <property type="molecule type" value="Genomic_DNA"/>
</dbReference>
<dbReference type="EMBL" id="AE014134">
    <property type="protein sequence ID" value="AAF53553.1"/>
    <property type="molecule type" value="Genomic_DNA"/>
</dbReference>
<dbReference type="EMBL" id="BT006002">
    <property type="protein sequence ID" value="AAO67367.1"/>
    <property type="molecule type" value="mRNA"/>
</dbReference>
<dbReference type="PIR" id="B23058">
    <property type="entry name" value="B23058"/>
</dbReference>
<dbReference type="RefSeq" id="NP_001260509.1">
    <property type="nucleotide sequence ID" value="NM_001273580.1"/>
</dbReference>
<dbReference type="RefSeq" id="NP_477164.1">
    <property type="nucleotide sequence ID" value="NM_057816.5"/>
</dbReference>
<dbReference type="SMR" id="P04657"/>
<dbReference type="BioGRID" id="61002">
    <property type="interactions" value="7"/>
</dbReference>
<dbReference type="DIP" id="DIP-21160N"/>
<dbReference type="FunCoup" id="P04657">
    <property type="interactions" value="204"/>
</dbReference>
<dbReference type="IntAct" id="P04657">
    <property type="interactions" value="1"/>
</dbReference>
<dbReference type="MINT" id="P04657"/>
<dbReference type="STRING" id="7227.FBpp0080445"/>
<dbReference type="PaxDb" id="7227-FBpp0080445"/>
<dbReference type="DNASU" id="34995"/>
<dbReference type="EnsemblMetazoa" id="FBtr0080888">
    <property type="protein sequence ID" value="FBpp0080445"/>
    <property type="gene ID" value="FBgn0086907"/>
</dbReference>
<dbReference type="EnsemblMetazoa" id="FBtr0335141">
    <property type="protein sequence ID" value="FBpp0307140"/>
    <property type="gene ID" value="FBgn0086907"/>
</dbReference>
<dbReference type="GeneID" id="34995"/>
<dbReference type="KEGG" id="dme:Dmel_CG13263"/>
<dbReference type="AGR" id="FB:FBgn0086907"/>
<dbReference type="CTD" id="34995"/>
<dbReference type="FlyBase" id="FBgn0086907">
    <property type="gene designation" value="Cyt-c-d"/>
</dbReference>
<dbReference type="VEuPathDB" id="VectorBase:FBgn0086907"/>
<dbReference type="eggNOG" id="KOG3453">
    <property type="taxonomic scope" value="Eukaryota"/>
</dbReference>
<dbReference type="GeneTree" id="ENSGT00940000168884"/>
<dbReference type="HOGENOM" id="CLU_060944_3_0_1"/>
<dbReference type="InParanoid" id="P04657"/>
<dbReference type="OMA" id="NKGVIWG"/>
<dbReference type="OrthoDB" id="449280at2759"/>
<dbReference type="PhylomeDB" id="P04657"/>
<dbReference type="BioGRID-ORCS" id="34995">
    <property type="hits" value="0 hits in 1 CRISPR screen"/>
</dbReference>
<dbReference type="GenomeRNAi" id="34995"/>
<dbReference type="PRO" id="PR:P04657"/>
<dbReference type="Proteomes" id="UP000000803">
    <property type="component" value="Chromosome 2L"/>
</dbReference>
<dbReference type="Bgee" id="FBgn0086907">
    <property type="expression patterns" value="Expressed in early elongation stage spermatid (Drosophila) in testis and 34 other cell types or tissues"/>
</dbReference>
<dbReference type="ExpressionAtlas" id="P04657">
    <property type="expression patterns" value="baseline and differential"/>
</dbReference>
<dbReference type="GO" id="GO:0005829">
    <property type="term" value="C:cytosol"/>
    <property type="evidence" value="ECO:0000314"/>
    <property type="project" value="FlyBase"/>
</dbReference>
<dbReference type="GO" id="GO:0005758">
    <property type="term" value="C:mitochondrial intermembrane space"/>
    <property type="evidence" value="ECO:0000250"/>
    <property type="project" value="FlyBase"/>
</dbReference>
<dbReference type="GO" id="GO:0005739">
    <property type="term" value="C:mitochondrion"/>
    <property type="evidence" value="ECO:0000314"/>
    <property type="project" value="FlyBase"/>
</dbReference>
<dbReference type="GO" id="GO:0008656">
    <property type="term" value="F:cysteine-type endopeptidase activator activity involved in apoptotic process"/>
    <property type="evidence" value="ECO:0000315"/>
    <property type="project" value="FlyBase"/>
</dbReference>
<dbReference type="GO" id="GO:0009055">
    <property type="term" value="F:electron transfer activity"/>
    <property type="evidence" value="ECO:0000314"/>
    <property type="project" value="FlyBase"/>
</dbReference>
<dbReference type="GO" id="GO:0020037">
    <property type="term" value="F:heme binding"/>
    <property type="evidence" value="ECO:0007669"/>
    <property type="project" value="InterPro"/>
</dbReference>
<dbReference type="GO" id="GO:0046872">
    <property type="term" value="F:metal ion binding"/>
    <property type="evidence" value="ECO:0007669"/>
    <property type="project" value="UniProtKB-KW"/>
</dbReference>
<dbReference type="GO" id="GO:0006123">
    <property type="term" value="P:mitochondrial electron transport, cytochrome c to oxygen"/>
    <property type="evidence" value="ECO:0000318"/>
    <property type="project" value="GO_Central"/>
</dbReference>
<dbReference type="GO" id="GO:0006122">
    <property type="term" value="P:mitochondrial electron transport, ubiquinol to cytochrome c"/>
    <property type="evidence" value="ECO:0000318"/>
    <property type="project" value="GO_Central"/>
</dbReference>
<dbReference type="GO" id="GO:0006119">
    <property type="term" value="P:oxidative phosphorylation"/>
    <property type="evidence" value="ECO:0000250"/>
    <property type="project" value="FlyBase"/>
</dbReference>
<dbReference type="GO" id="GO:0046669">
    <property type="term" value="P:regulation of compound eye retinal cell programmed cell death"/>
    <property type="evidence" value="ECO:0000315"/>
    <property type="project" value="FlyBase"/>
</dbReference>
<dbReference type="GO" id="GO:0007291">
    <property type="term" value="P:sperm individualization"/>
    <property type="evidence" value="ECO:0000315"/>
    <property type="project" value="FlyBase"/>
</dbReference>
<dbReference type="FunFam" id="1.10.760.10:FF:000001">
    <property type="entry name" value="Cytochrome c iso-1"/>
    <property type="match status" value="1"/>
</dbReference>
<dbReference type="Gene3D" id="1.10.760.10">
    <property type="entry name" value="Cytochrome c-like domain"/>
    <property type="match status" value="1"/>
</dbReference>
<dbReference type="InterPro" id="IPR009056">
    <property type="entry name" value="Cyt_c-like_dom"/>
</dbReference>
<dbReference type="InterPro" id="IPR036909">
    <property type="entry name" value="Cyt_c-like_dom_sf"/>
</dbReference>
<dbReference type="InterPro" id="IPR002327">
    <property type="entry name" value="Cyt_c_1A/1B"/>
</dbReference>
<dbReference type="PANTHER" id="PTHR11961">
    <property type="entry name" value="CYTOCHROME C"/>
    <property type="match status" value="1"/>
</dbReference>
<dbReference type="Pfam" id="PF00034">
    <property type="entry name" value="Cytochrom_C"/>
    <property type="match status" value="1"/>
</dbReference>
<dbReference type="PRINTS" id="PR00604">
    <property type="entry name" value="CYTCHRMECIAB"/>
</dbReference>
<dbReference type="SUPFAM" id="SSF46626">
    <property type="entry name" value="Cytochrome c"/>
    <property type="match status" value="1"/>
</dbReference>
<dbReference type="PROSITE" id="PS51007">
    <property type="entry name" value="CYTC"/>
    <property type="match status" value="1"/>
</dbReference>
<gene>
    <name type="primary">Cyt-c-d</name>
    <name type="synonym">CytC1</name>
    <name type="synonym">DC3</name>
    <name type="ORF">CG13263</name>
</gene>
<name>CYC1_DROME</name>
<proteinExistence type="evidence at transcript level"/>
<sequence length="105" mass="11369">MGSGDAENGKKIFVQKCAQCHTYEVGGKHKVGPNLGGVVGRKCGTAAGYKYTDANIKKGVTWTEGNLDEYLKDPKKYIPGTKMVFAGLKKAEERADLIAFLKSNK</sequence>
<evidence type="ECO:0000250" key="1"/>
<evidence type="ECO:0000305" key="2"/>
<protein>
    <recommendedName>
        <fullName>Cytochrome c-1</fullName>
    </recommendedName>
    <alternativeName>
        <fullName>Cytochrome c-distal</fullName>
    </alternativeName>
</protein>